<keyword id="KW-1185">Reference proteome</keyword>
<organism>
    <name type="scientific">Methylorubrum extorquens (strain ATCC 14718 / DSM 1338 / JCM 2805 / NCIMB 9133 / AM1)</name>
    <name type="common">Methylobacterium extorquens</name>
    <dbReference type="NCBI Taxonomy" id="272630"/>
    <lineage>
        <taxon>Bacteria</taxon>
        <taxon>Pseudomonadati</taxon>
        <taxon>Pseudomonadota</taxon>
        <taxon>Alphaproteobacteria</taxon>
        <taxon>Hyphomicrobiales</taxon>
        <taxon>Methylobacteriaceae</taxon>
        <taxon>Methylorubrum</taxon>
    </lineage>
</organism>
<dbReference type="EMBL" id="L26406">
    <property type="protein sequence ID" value="AAB46938.1"/>
    <property type="molecule type" value="Genomic_DNA"/>
</dbReference>
<dbReference type="EMBL" id="CP001510">
    <property type="protein sequence ID" value="ACS40533.1"/>
    <property type="molecule type" value="Genomic_DNA"/>
</dbReference>
<dbReference type="RefSeq" id="WP_012753048.1">
    <property type="nucleotide sequence ID" value="NC_012808.1"/>
</dbReference>
<dbReference type="STRING" id="272630.MexAM1_META1p2775"/>
<dbReference type="KEGG" id="mea:Mex_1p2775"/>
<dbReference type="eggNOG" id="ENOG5032SZ3">
    <property type="taxonomic scope" value="Bacteria"/>
</dbReference>
<dbReference type="HOGENOM" id="CLU_969268_0_0_5"/>
<dbReference type="OrthoDB" id="7932535at2"/>
<dbReference type="UniPathway" id="UPA00895"/>
<dbReference type="Proteomes" id="UP000009081">
    <property type="component" value="Chromosome"/>
</dbReference>
<gene>
    <name type="primary">mauJ</name>
    <name type="ordered locus">MexAM1_META1p2775</name>
</gene>
<feature type="chain" id="PRO_0000208942" description="Methylamine utilization protein MauJ">
    <location>
        <begin position="1"/>
        <end position="295"/>
    </location>
</feature>
<comment type="pathway">
    <text>One-carbon metabolism; methylamine degradation.</text>
</comment>
<sequence>MWIPYDLTGSLKAETSAASIQRSQADRSVRDVLVGFFVRNPITQSWEIDIRAEAVKEVLMAELDGMPTEIACYGGETGKLSEIIYRVKSAEPYAAFDACRHDLDDRLARWTLELGRGMTIAGWRVADPANEARWRCTPFRPSALDLDLNAVAFAPDDLKPLLRLYQRARNASDPAWRLLNAYAVLKCWRAGKAPFSLMPQQPAPVVTLEMLVHSGALGCAESFKDQPLASLVDALEVWRDAVLQDLEAPGEGAHGLRGEARWRLAHMASIADLAARETLIREIARRRSADLALAS</sequence>
<protein>
    <recommendedName>
        <fullName>Methylamine utilization protein MauJ</fullName>
    </recommendedName>
</protein>
<name>MAUJ_METEA</name>
<accession>Q49127</accession>
<accession>C5ATK9</accession>
<proteinExistence type="predicted"/>
<reference key="1">
    <citation type="journal article" date="1994" name="J. Bacteriol.">
        <title>Genetic organization of the mau gene cluster in Methylobacterium extorquens AM1: complete nucleotide sequence and generation and characteristics of mau mutants.</title>
        <authorList>
            <person name="Chistoserdov A.Y."/>
            <person name="Chistoserdova L.V."/>
            <person name="McIntire W.S."/>
            <person name="Lidstrom M.E."/>
        </authorList>
    </citation>
    <scope>NUCLEOTIDE SEQUENCE [GENOMIC DNA]</scope>
</reference>
<reference key="2">
    <citation type="journal article" date="2009" name="PLoS ONE">
        <title>Methylobacterium genome sequences: a reference blueprint to investigate microbial metabolism of C1 compounds from natural and industrial sources.</title>
        <authorList>
            <person name="Vuilleumier S."/>
            <person name="Chistoserdova L."/>
            <person name="Lee M.-C."/>
            <person name="Bringel F."/>
            <person name="Lajus A."/>
            <person name="Zhou Y."/>
            <person name="Gourion B."/>
            <person name="Barbe V."/>
            <person name="Chang J."/>
            <person name="Cruveiller S."/>
            <person name="Dossat C."/>
            <person name="Gillett W."/>
            <person name="Gruffaz C."/>
            <person name="Haugen E."/>
            <person name="Hourcade E."/>
            <person name="Levy R."/>
            <person name="Mangenot S."/>
            <person name="Muller E."/>
            <person name="Nadalig T."/>
            <person name="Pagni M."/>
            <person name="Penny C."/>
            <person name="Peyraud R."/>
            <person name="Robinson D.G."/>
            <person name="Roche D."/>
            <person name="Rouy Z."/>
            <person name="Saenampechek C."/>
            <person name="Salvignol G."/>
            <person name="Vallenet D."/>
            <person name="Wu Z."/>
            <person name="Marx C.J."/>
            <person name="Vorholt J.A."/>
            <person name="Olson M.V."/>
            <person name="Kaul R."/>
            <person name="Weissenbach J."/>
            <person name="Medigue C."/>
            <person name="Lidstrom M.E."/>
        </authorList>
    </citation>
    <scope>NUCLEOTIDE SEQUENCE [LARGE SCALE GENOMIC DNA]</scope>
    <source>
        <strain>ATCC 14718 / DSM 1338 / JCM 2805 / NCIMB 9133 / AM1</strain>
    </source>
</reference>